<organism>
    <name type="scientific">Mus musculus</name>
    <name type="common">Mouse</name>
    <dbReference type="NCBI Taxonomy" id="10090"/>
    <lineage>
        <taxon>Eukaryota</taxon>
        <taxon>Metazoa</taxon>
        <taxon>Chordata</taxon>
        <taxon>Craniata</taxon>
        <taxon>Vertebrata</taxon>
        <taxon>Euteleostomi</taxon>
        <taxon>Mammalia</taxon>
        <taxon>Eutheria</taxon>
        <taxon>Euarchontoglires</taxon>
        <taxon>Glires</taxon>
        <taxon>Rodentia</taxon>
        <taxon>Myomorpha</taxon>
        <taxon>Muroidea</taxon>
        <taxon>Muridae</taxon>
        <taxon>Murinae</taxon>
        <taxon>Mus</taxon>
        <taxon>Mus</taxon>
    </lineage>
</organism>
<proteinExistence type="evidence at protein level"/>
<evidence type="ECO:0000250" key="1">
    <source>
        <dbReference type="UniProtKB" id="Q9P2N6"/>
    </source>
</evidence>
<evidence type="ECO:0000256" key="2">
    <source>
        <dbReference type="SAM" id="MobiDB-lite"/>
    </source>
</evidence>
<evidence type="ECO:0000269" key="3">
    <source>
    </source>
</evidence>
<evidence type="ECO:0000269" key="4">
    <source>
    </source>
</evidence>
<evidence type="ECO:0000269" key="5">
    <source>
    </source>
</evidence>
<evidence type="ECO:0000269" key="6">
    <source>
    </source>
</evidence>
<evidence type="ECO:0000303" key="7">
    <source>
    </source>
</evidence>
<evidence type="ECO:0000303" key="8">
    <source>
    </source>
</evidence>
<evidence type="ECO:0000305" key="9"/>
<evidence type="ECO:0007744" key="10">
    <source>
    </source>
</evidence>
<name>KANL3_MOUSE</name>
<protein>
    <recommendedName>
        <fullName>KAT8 regulatory NSL complex subunit 3</fullName>
    </recommendedName>
    <alternativeName>
        <fullName>NSL complex protein NSL3</fullName>
    </alternativeName>
    <alternativeName>
        <fullName>Non-specific lethal 3 homolog</fullName>
    </alternativeName>
</protein>
<accession>A2RSY1</accession>
<accession>Q6ZPU0</accession>
<accession>Q8C0P9</accession>
<gene>
    <name type="primary">Kansl3</name>
    <name type="synonym">Kiaa1310</name>
    <name type="synonym">Nsl3</name>
</gene>
<reference key="1">
    <citation type="journal article" date="2003" name="DNA Res.">
        <title>Prediction of the coding sequences of mouse homologues of KIAA gene: III. The complete nucleotide sequences of 500 mouse KIAA-homologous cDNAs identified by screening of terminal sequences of cDNA clones randomly sampled from size-fractionated libraries.</title>
        <authorList>
            <person name="Okazaki N."/>
            <person name="Kikuno R."/>
            <person name="Ohara R."/>
            <person name="Inamoto S."/>
            <person name="Koseki H."/>
            <person name="Hiraoka S."/>
            <person name="Saga Y."/>
            <person name="Nagase T."/>
            <person name="Ohara O."/>
            <person name="Koga H."/>
        </authorList>
    </citation>
    <scope>NUCLEOTIDE SEQUENCE [LARGE SCALE MRNA] (ISOFORM 3)</scope>
    <source>
        <tissue>Embryonic tail</tissue>
    </source>
</reference>
<reference key="2">
    <citation type="journal article" date="2005" name="Science">
        <title>The transcriptional landscape of the mammalian genome.</title>
        <authorList>
            <person name="Carninci P."/>
            <person name="Kasukawa T."/>
            <person name="Katayama S."/>
            <person name="Gough J."/>
            <person name="Frith M.C."/>
            <person name="Maeda N."/>
            <person name="Oyama R."/>
            <person name="Ravasi T."/>
            <person name="Lenhard B."/>
            <person name="Wells C."/>
            <person name="Kodzius R."/>
            <person name="Shimokawa K."/>
            <person name="Bajic V.B."/>
            <person name="Brenner S.E."/>
            <person name="Batalov S."/>
            <person name="Forrest A.R."/>
            <person name="Zavolan M."/>
            <person name="Davis M.J."/>
            <person name="Wilming L.G."/>
            <person name="Aidinis V."/>
            <person name="Allen J.E."/>
            <person name="Ambesi-Impiombato A."/>
            <person name="Apweiler R."/>
            <person name="Aturaliya R.N."/>
            <person name="Bailey T.L."/>
            <person name="Bansal M."/>
            <person name="Baxter L."/>
            <person name="Beisel K.W."/>
            <person name="Bersano T."/>
            <person name="Bono H."/>
            <person name="Chalk A.M."/>
            <person name="Chiu K.P."/>
            <person name="Choudhary V."/>
            <person name="Christoffels A."/>
            <person name="Clutterbuck D.R."/>
            <person name="Crowe M.L."/>
            <person name="Dalla E."/>
            <person name="Dalrymple B.P."/>
            <person name="de Bono B."/>
            <person name="Della Gatta G."/>
            <person name="di Bernardo D."/>
            <person name="Down T."/>
            <person name="Engstrom P."/>
            <person name="Fagiolini M."/>
            <person name="Faulkner G."/>
            <person name="Fletcher C.F."/>
            <person name="Fukushima T."/>
            <person name="Furuno M."/>
            <person name="Futaki S."/>
            <person name="Gariboldi M."/>
            <person name="Georgii-Hemming P."/>
            <person name="Gingeras T.R."/>
            <person name="Gojobori T."/>
            <person name="Green R.E."/>
            <person name="Gustincich S."/>
            <person name="Harbers M."/>
            <person name="Hayashi Y."/>
            <person name="Hensch T.K."/>
            <person name="Hirokawa N."/>
            <person name="Hill D."/>
            <person name="Huminiecki L."/>
            <person name="Iacono M."/>
            <person name="Ikeo K."/>
            <person name="Iwama A."/>
            <person name="Ishikawa T."/>
            <person name="Jakt M."/>
            <person name="Kanapin A."/>
            <person name="Katoh M."/>
            <person name="Kawasawa Y."/>
            <person name="Kelso J."/>
            <person name="Kitamura H."/>
            <person name="Kitano H."/>
            <person name="Kollias G."/>
            <person name="Krishnan S.P."/>
            <person name="Kruger A."/>
            <person name="Kummerfeld S.K."/>
            <person name="Kurochkin I.V."/>
            <person name="Lareau L.F."/>
            <person name="Lazarevic D."/>
            <person name="Lipovich L."/>
            <person name="Liu J."/>
            <person name="Liuni S."/>
            <person name="McWilliam S."/>
            <person name="Madan Babu M."/>
            <person name="Madera M."/>
            <person name="Marchionni L."/>
            <person name="Matsuda H."/>
            <person name="Matsuzawa S."/>
            <person name="Miki H."/>
            <person name="Mignone F."/>
            <person name="Miyake S."/>
            <person name="Morris K."/>
            <person name="Mottagui-Tabar S."/>
            <person name="Mulder N."/>
            <person name="Nakano N."/>
            <person name="Nakauchi H."/>
            <person name="Ng P."/>
            <person name="Nilsson R."/>
            <person name="Nishiguchi S."/>
            <person name="Nishikawa S."/>
            <person name="Nori F."/>
            <person name="Ohara O."/>
            <person name="Okazaki Y."/>
            <person name="Orlando V."/>
            <person name="Pang K.C."/>
            <person name="Pavan W.J."/>
            <person name="Pavesi G."/>
            <person name="Pesole G."/>
            <person name="Petrovsky N."/>
            <person name="Piazza S."/>
            <person name="Reed J."/>
            <person name="Reid J.F."/>
            <person name="Ring B.Z."/>
            <person name="Ringwald M."/>
            <person name="Rost B."/>
            <person name="Ruan Y."/>
            <person name="Salzberg S.L."/>
            <person name="Sandelin A."/>
            <person name="Schneider C."/>
            <person name="Schoenbach C."/>
            <person name="Sekiguchi K."/>
            <person name="Semple C.A."/>
            <person name="Seno S."/>
            <person name="Sessa L."/>
            <person name="Sheng Y."/>
            <person name="Shibata Y."/>
            <person name="Shimada H."/>
            <person name="Shimada K."/>
            <person name="Silva D."/>
            <person name="Sinclair B."/>
            <person name="Sperling S."/>
            <person name="Stupka E."/>
            <person name="Sugiura K."/>
            <person name="Sultana R."/>
            <person name="Takenaka Y."/>
            <person name="Taki K."/>
            <person name="Tammoja K."/>
            <person name="Tan S.L."/>
            <person name="Tang S."/>
            <person name="Taylor M.S."/>
            <person name="Tegner J."/>
            <person name="Teichmann S.A."/>
            <person name="Ueda H.R."/>
            <person name="van Nimwegen E."/>
            <person name="Verardo R."/>
            <person name="Wei C.L."/>
            <person name="Yagi K."/>
            <person name="Yamanishi H."/>
            <person name="Zabarovsky E."/>
            <person name="Zhu S."/>
            <person name="Zimmer A."/>
            <person name="Hide W."/>
            <person name="Bult C."/>
            <person name="Grimmond S.M."/>
            <person name="Teasdale R.D."/>
            <person name="Liu E.T."/>
            <person name="Brusic V."/>
            <person name="Quackenbush J."/>
            <person name="Wahlestedt C."/>
            <person name="Mattick J.S."/>
            <person name="Hume D.A."/>
            <person name="Kai C."/>
            <person name="Sasaki D."/>
            <person name="Tomaru Y."/>
            <person name="Fukuda S."/>
            <person name="Kanamori-Katayama M."/>
            <person name="Suzuki M."/>
            <person name="Aoki J."/>
            <person name="Arakawa T."/>
            <person name="Iida J."/>
            <person name="Imamura K."/>
            <person name="Itoh M."/>
            <person name="Kato T."/>
            <person name="Kawaji H."/>
            <person name="Kawagashira N."/>
            <person name="Kawashima T."/>
            <person name="Kojima M."/>
            <person name="Kondo S."/>
            <person name="Konno H."/>
            <person name="Nakano K."/>
            <person name="Ninomiya N."/>
            <person name="Nishio T."/>
            <person name="Okada M."/>
            <person name="Plessy C."/>
            <person name="Shibata K."/>
            <person name="Shiraki T."/>
            <person name="Suzuki S."/>
            <person name="Tagami M."/>
            <person name="Waki K."/>
            <person name="Watahiki A."/>
            <person name="Okamura-Oho Y."/>
            <person name="Suzuki H."/>
            <person name="Kawai J."/>
            <person name="Hayashizaki Y."/>
        </authorList>
    </citation>
    <scope>NUCLEOTIDE SEQUENCE [LARGE SCALE MRNA] (ISOFORM 2)</scope>
    <source>
        <strain>C57BL/6J</strain>
        <tissue>Testis</tissue>
    </source>
</reference>
<reference key="3">
    <citation type="journal article" date="2004" name="Genome Res.">
        <title>The status, quality, and expansion of the NIH full-length cDNA project: the Mammalian Gene Collection (MGC).</title>
        <authorList>
            <consortium name="The MGC Project Team"/>
        </authorList>
    </citation>
    <scope>NUCLEOTIDE SEQUENCE [LARGE SCALE MRNA] (ISOFORM 1)</scope>
    <source>
        <tissue>Brain</tissue>
    </source>
</reference>
<reference key="4">
    <citation type="journal article" date="2010" name="Cell">
        <title>A tissue-specific atlas of mouse protein phosphorylation and expression.</title>
        <authorList>
            <person name="Huttlin E.L."/>
            <person name="Jedrychowski M.P."/>
            <person name="Elias J.E."/>
            <person name="Goswami T."/>
            <person name="Rad R."/>
            <person name="Beausoleil S.A."/>
            <person name="Villen J."/>
            <person name="Haas W."/>
            <person name="Sowa M.E."/>
            <person name="Gygi S.P."/>
        </authorList>
    </citation>
    <scope>PHOSPHORYLATION [LARGE SCALE ANALYSIS] AT SER-536 AND SER-540</scope>
    <scope>IDENTIFICATION BY MASS SPECTROMETRY [LARGE SCALE ANALYSIS]</scope>
    <source>
        <tissue>Kidney</tissue>
        <tissue>Lung</tissue>
        <tissue>Spleen</tissue>
    </source>
</reference>
<reference key="5">
    <citation type="journal article" date="2014" name="Elife">
        <title>MOF-associated complexes ensure stem cell identity and Xist repression.</title>
        <authorList>
            <person name="Chelmicki T."/>
            <person name="Duendar F."/>
            <person name="Turley M.J."/>
            <person name="Khanam T."/>
            <person name="Aktas T."/>
            <person name="Ramirez F."/>
            <person name="Gendrel A.V."/>
            <person name="Wright P.R."/>
            <person name="Videm P."/>
            <person name="Backofen R."/>
            <person name="Heard E."/>
            <person name="Manke T."/>
            <person name="Akhtar A."/>
        </authorList>
    </citation>
    <scope>IDENTIFICATION IN THE NSL COMPLEX</scope>
</reference>
<reference key="6">
    <citation type="journal article" date="2019" name="Nat. Cell Biol.">
        <title>The NSL complex maintains nuclear architecture stability via lamin A/C acetylation.</title>
        <authorList>
            <person name="Karoutas A."/>
            <person name="Szymanski W."/>
            <person name="Rausch T."/>
            <person name="Guhathakurta S."/>
            <person name="Rog-Zielinska E.A."/>
            <person name="Peyronnet R."/>
            <person name="Seyfferth J."/>
            <person name="Chen H.R."/>
            <person name="de Leeuw R."/>
            <person name="Herquel B."/>
            <person name="Kimura H."/>
            <person name="Mittler G."/>
            <person name="Kohl P."/>
            <person name="Medalia O."/>
            <person name="Korbel J.O."/>
            <person name="Akhtar A."/>
        </authorList>
    </citation>
    <scope>FUNCTION</scope>
</reference>
<reference key="7">
    <citation type="journal article" date="2023" name="Sci. Adv.">
        <title>Transcriptional regulation by the NSL complex enables diversification of IFT functions in ciliated versus nonciliated cells.</title>
        <authorList>
            <person name="Tsang T.H."/>
            <person name="Wiese M."/>
            <person name="Helmstaedter M."/>
            <person name="Stehle T."/>
            <person name="Seyfferth J."/>
            <person name="Shvedunova M."/>
            <person name="Holz H."/>
            <person name="Walz G."/>
            <person name="Akhtar A."/>
        </authorList>
    </citation>
    <scope>FUNCTION</scope>
    <scope>DISRUPTION PHENOTYPE</scope>
</reference>
<reference key="8">
    <citation type="journal article" date="2024" name="Mol. Reprod. Dev.">
        <title>Loss of KANSL3 leads to defective inner cell mass and early embryonic lethality.</title>
        <authorList>
            <person name="Chander A."/>
            <person name="Mager J."/>
        </authorList>
    </citation>
    <scope>FUNCTION</scope>
    <scope>DISRUPTION PHENOTYPE</scope>
</reference>
<dbReference type="EMBL" id="AK129329">
    <property type="protein sequence ID" value="BAC98139.1"/>
    <property type="status" value="ALT_INIT"/>
    <property type="molecule type" value="mRNA"/>
</dbReference>
<dbReference type="EMBL" id="AK030079">
    <property type="protein sequence ID" value="BAC26771.1"/>
    <property type="molecule type" value="mRNA"/>
</dbReference>
<dbReference type="EMBL" id="BC132293">
    <property type="protein sequence ID" value="AAI32294.1"/>
    <property type="molecule type" value="mRNA"/>
</dbReference>
<dbReference type="CCDS" id="CCDS14877.1">
    <molecule id="A2RSY1-2"/>
</dbReference>
<dbReference type="CCDS" id="CCDS78561.1">
    <molecule id="A2RSY1-1"/>
</dbReference>
<dbReference type="RefSeq" id="NP_001297442.1">
    <molecule id="A2RSY1-1"/>
    <property type="nucleotide sequence ID" value="NM_001310513.1"/>
</dbReference>
<dbReference type="RefSeq" id="NP_766240.1">
    <molecule id="A2RSY1-2"/>
    <property type="nucleotide sequence ID" value="NM_172652.3"/>
</dbReference>
<dbReference type="RefSeq" id="XP_036020199.1">
    <molecule id="A2RSY1-3"/>
    <property type="nucleotide sequence ID" value="XM_036164306.1"/>
</dbReference>
<dbReference type="SMR" id="A2RSY1"/>
<dbReference type="BioGRID" id="230578">
    <property type="interactions" value="2"/>
</dbReference>
<dbReference type="ComplexPortal" id="CPX-875">
    <property type="entry name" value="NSL histone acetyltransferase complex"/>
</dbReference>
<dbReference type="FunCoup" id="A2RSY1">
    <property type="interactions" value="2498"/>
</dbReference>
<dbReference type="IntAct" id="A2RSY1">
    <property type="interactions" value="1"/>
</dbReference>
<dbReference type="STRING" id="10090.ENSMUSP00000140597"/>
<dbReference type="ESTHER" id="mouse-Kansl3">
    <property type="family name" value="NLS3-Tex30"/>
</dbReference>
<dbReference type="GlyGen" id="A2RSY1">
    <property type="glycosylation" value="13 sites, 1 O-linked glycan (11 sites)"/>
</dbReference>
<dbReference type="iPTMnet" id="A2RSY1"/>
<dbReference type="PhosphoSitePlus" id="A2RSY1"/>
<dbReference type="jPOST" id="A2RSY1"/>
<dbReference type="PaxDb" id="10090-ENSMUSP00000010597"/>
<dbReference type="PeptideAtlas" id="A2RSY1"/>
<dbReference type="ProteomicsDB" id="269060">
    <molecule id="A2RSY1-1"/>
</dbReference>
<dbReference type="ProteomicsDB" id="269061">
    <molecule id="A2RSY1-2"/>
</dbReference>
<dbReference type="ProteomicsDB" id="269062">
    <molecule id="A2RSY1-3"/>
</dbReference>
<dbReference type="Pumba" id="A2RSY1"/>
<dbReference type="Antibodypedia" id="32468">
    <property type="antibodies" value="109 antibodies from 20 providers"/>
</dbReference>
<dbReference type="Ensembl" id="ENSMUST00000010597.10">
    <molecule id="A2RSY1-2"/>
    <property type="protein sequence ID" value="ENSMUSP00000010597.4"/>
    <property type="gene ID" value="ENSMUSG00000010453.13"/>
</dbReference>
<dbReference type="Ensembl" id="ENSMUST00000185912.7">
    <molecule id="A2RSY1-3"/>
    <property type="protein sequence ID" value="ENSMUSP00000140547.2"/>
    <property type="gene ID" value="ENSMUSG00000010453.13"/>
</dbReference>
<dbReference type="Ensembl" id="ENSMUST00000186470.2">
    <molecule id="A2RSY1-1"/>
    <property type="protein sequence ID" value="ENSMUSP00000140597.2"/>
    <property type="gene ID" value="ENSMUSG00000010453.13"/>
</dbReference>
<dbReference type="GeneID" id="226976"/>
<dbReference type="KEGG" id="mmu:226976"/>
<dbReference type="UCSC" id="uc007apz.1">
    <molecule id="A2RSY1-1"/>
    <property type="organism name" value="mouse"/>
</dbReference>
<dbReference type="UCSC" id="uc007aqa.1">
    <molecule id="A2RSY1-2"/>
    <property type="organism name" value="mouse"/>
</dbReference>
<dbReference type="UCSC" id="uc011wjj.1">
    <molecule id="A2RSY1-3"/>
    <property type="organism name" value="mouse"/>
</dbReference>
<dbReference type="AGR" id="MGI:1918055"/>
<dbReference type="CTD" id="55683"/>
<dbReference type="MGI" id="MGI:1918055">
    <property type="gene designation" value="Kansl3"/>
</dbReference>
<dbReference type="VEuPathDB" id="HostDB:ENSMUSG00000010453"/>
<dbReference type="eggNOG" id="KOG3253">
    <property type="taxonomic scope" value="Eukaryota"/>
</dbReference>
<dbReference type="GeneTree" id="ENSGT00390000007636"/>
<dbReference type="HOGENOM" id="CLU_009783_0_0_1"/>
<dbReference type="InParanoid" id="A2RSY1"/>
<dbReference type="OMA" id="WEEHVNX"/>
<dbReference type="OrthoDB" id="6415022at2759"/>
<dbReference type="PhylomeDB" id="A2RSY1"/>
<dbReference type="TreeFam" id="TF323466"/>
<dbReference type="Reactome" id="R-MMU-3214847">
    <property type="pathway name" value="HATs acetylate histones"/>
</dbReference>
<dbReference type="Reactome" id="R-MMU-9772755">
    <property type="pathway name" value="Formation of WDR5-containing histone-modifying complexes"/>
</dbReference>
<dbReference type="BioGRID-ORCS" id="226976">
    <property type="hits" value="23 hits in 80 CRISPR screens"/>
</dbReference>
<dbReference type="ChiTaRS" id="Kansl3">
    <property type="organism name" value="mouse"/>
</dbReference>
<dbReference type="PRO" id="PR:A2RSY1"/>
<dbReference type="Proteomes" id="UP000000589">
    <property type="component" value="Chromosome 1"/>
</dbReference>
<dbReference type="RNAct" id="A2RSY1">
    <property type="molecule type" value="protein"/>
</dbReference>
<dbReference type="Bgee" id="ENSMUSG00000010453">
    <property type="expression patterns" value="Expressed in spermatocyte and 227 other cell types or tissues"/>
</dbReference>
<dbReference type="ExpressionAtlas" id="A2RSY1">
    <property type="expression patterns" value="baseline and differential"/>
</dbReference>
<dbReference type="GO" id="GO:0000123">
    <property type="term" value="C:histone acetyltransferase complex"/>
    <property type="evidence" value="ECO:0000250"/>
    <property type="project" value="UniProtKB"/>
</dbReference>
<dbReference type="GO" id="GO:0005739">
    <property type="term" value="C:mitochondrion"/>
    <property type="evidence" value="ECO:0000250"/>
    <property type="project" value="UniProtKB"/>
</dbReference>
<dbReference type="GO" id="GO:0044545">
    <property type="term" value="C:NSL complex"/>
    <property type="evidence" value="ECO:0000314"/>
    <property type="project" value="UniProtKB"/>
</dbReference>
<dbReference type="GO" id="GO:0005654">
    <property type="term" value="C:nucleoplasm"/>
    <property type="evidence" value="ECO:0007669"/>
    <property type="project" value="Ensembl"/>
</dbReference>
<dbReference type="GO" id="GO:0000922">
    <property type="term" value="C:spindle pole"/>
    <property type="evidence" value="ECO:0007669"/>
    <property type="project" value="Ensembl"/>
</dbReference>
<dbReference type="GO" id="GO:0051011">
    <property type="term" value="F:microtubule minus-end binding"/>
    <property type="evidence" value="ECO:0007669"/>
    <property type="project" value="Ensembl"/>
</dbReference>
<dbReference type="GO" id="GO:0006325">
    <property type="term" value="P:chromatin organization"/>
    <property type="evidence" value="ECO:0007669"/>
    <property type="project" value="UniProtKB-KW"/>
</dbReference>
<dbReference type="GO" id="GO:0090307">
    <property type="term" value="P:mitotic spindle assembly"/>
    <property type="evidence" value="ECO:0007669"/>
    <property type="project" value="Ensembl"/>
</dbReference>
<dbReference type="GO" id="GO:0045893">
    <property type="term" value="P:positive regulation of DNA-templated transcription"/>
    <property type="evidence" value="ECO:0000303"/>
    <property type="project" value="ComplexPortal"/>
</dbReference>
<dbReference type="GO" id="GO:1903108">
    <property type="term" value="P:regulation of mitochondrial transcription"/>
    <property type="evidence" value="ECO:0000250"/>
    <property type="project" value="UniProtKB"/>
</dbReference>
<dbReference type="FunFam" id="3.40.50.1820:FF:000032">
    <property type="entry name" value="KAT8 regulatory NSL complex subunit 3 isoform X2"/>
    <property type="match status" value="1"/>
</dbReference>
<dbReference type="Gene3D" id="3.40.50.1820">
    <property type="entry name" value="alpha/beta hydrolase"/>
    <property type="match status" value="1"/>
</dbReference>
<dbReference type="InterPro" id="IPR029058">
    <property type="entry name" value="AB_hydrolase_fold"/>
</dbReference>
<dbReference type="InterPro" id="IPR046879">
    <property type="entry name" value="KANL3/Tex30_Abhydrolase"/>
</dbReference>
<dbReference type="InterPro" id="IPR056519">
    <property type="entry name" value="KANSL3_1st"/>
</dbReference>
<dbReference type="InterPro" id="IPR026555">
    <property type="entry name" value="NSL3/Tex30"/>
</dbReference>
<dbReference type="PANTHER" id="PTHR13136:SF16">
    <property type="entry name" value="KAT8 REGULATORY NSL COMPLEX SUBUNIT 3"/>
    <property type="match status" value="1"/>
</dbReference>
<dbReference type="PANTHER" id="PTHR13136">
    <property type="entry name" value="TESTIS DEVELOPMENT PROTEIN PRTD"/>
    <property type="match status" value="1"/>
</dbReference>
<dbReference type="Pfam" id="PF20408">
    <property type="entry name" value="Abhydrolase_11"/>
    <property type="match status" value="1"/>
</dbReference>
<dbReference type="Pfam" id="PF23154">
    <property type="entry name" value="KANSL3_1st"/>
    <property type="match status" value="1"/>
</dbReference>
<dbReference type="SUPFAM" id="SSF53474">
    <property type="entry name" value="alpha/beta-Hydrolases"/>
    <property type="match status" value="1"/>
</dbReference>
<comment type="function">
    <text evidence="1 4 5 6">Non-catalytic component of the NSL histone acetyltransferase complex, a multiprotein complex that mediates histone H4 acetylation at 'Lys-5'- and 'Lys-8' (H4K5ac and H4K8ac) at transcription start sites and promotes transcription initiation (By similarity). The NSL complex also acts as a regulator of gene expression in mitochondria (By similarity). Within the NSL complex, KANSL3 is required to promote KAT8 association with mitochondrial DNA (By similarity). Required for transcription of intraciliary transport genes in both ciliated and non-ciliated cells (PubMed:37624894). This is necessary for cilium assembly in ciliated cells and for organization of the microtubule cytoskeleton in non-ciliated cells (PubMed:37624894). Also required within the NSL complex to maintain nuclear architecture stability by promoting KAT8-mediated acetylation of lamin LMNA (PubMed:31576060). Plays an essential role in spindle assembly during mitosis (By similarity). Acts as a microtubule minus-end binding protein which stabilizes microtubules and promotes their assembly (By similarity). Indispensable during early embryonic development where it is required for proper lineage specification and maintenance during peri-implantation development and is essential for implantation (PubMed:38769918).</text>
</comment>
<comment type="subunit">
    <text evidence="3">Component of the NSL complex at least composed of KAT8/MOF, KANSL1, KANSL2, KANSL3, MCRS1, PHF20, OGT1/OGT, WDR5 and HCFC1.</text>
</comment>
<comment type="subcellular location">
    <subcellularLocation>
        <location evidence="1">Nucleus</location>
    </subcellularLocation>
    <subcellularLocation>
        <location evidence="1">Mitochondrion</location>
    </subcellularLocation>
    <subcellularLocation>
        <location evidence="1">Cytoplasm</location>
        <location evidence="1">Cytoskeleton</location>
        <location evidence="1">Spindle pole</location>
    </subcellularLocation>
    <text evidence="1">Concentrated in the nucleus during interphase but displays a marked relocalization to the spindle poles during mitosis.</text>
</comment>
<comment type="alternative products">
    <event type="alternative splicing"/>
    <isoform>
        <id>A2RSY1-1</id>
        <name>1</name>
        <sequence type="displayed"/>
    </isoform>
    <isoform>
        <id>A2RSY1-2</id>
        <name>2</name>
        <sequence type="described" ref="VSP_025335"/>
    </isoform>
    <isoform>
        <id>A2RSY1-3</id>
        <name>3</name>
        <sequence type="described" ref="VSP_025334 VSP_025335"/>
    </isoform>
</comment>
<comment type="disruption phenotype">
    <text evidence="5 6">Embryonic lethality at peri-implantation stages with failure to hatch out of the zona pellucida (PubMed:38769918). Blastocysts show a significantly reduced number of cells in the inner cell mass and there is a significant decrease in H4K5ac levels (PubMed:38769918). Conditional knockout in podocytes results in glomerulosclerosis and kidney failure, leading to early lethality (PubMed:37624894). Down-regulation of genes related to cilia and microtubule-based transport (PubMed:37624894).</text>
</comment>
<comment type="sequence caution" evidence="9">
    <conflict type="erroneous initiation">
        <sequence resource="EMBL-CDS" id="BAC98139"/>
    </conflict>
    <text>Extended N-terminus.</text>
</comment>
<sequence>MAHRGGERDFQTSARRMGTSLLFQLSVHERELDLVFLDHSYAKPWSAHPDASSARPTRMLFVTPRRQQENTIESDVPIDVETVTATPVPLYDNQKARSVMNECERHVIFARTDADAPPPPEDWEEHVNRTGWTVAQNKLFNKILKALQSDRLARLANEGACNEPVLRRVAVDKCARRVRQALASVSWDTKLTQWLHTTLVETLSLPMLAAYLDALQTLKGKIPTLIDRMLVSSNTKTGAAGAEALSLLLKRPWDPAVGVLSHNKPSKLPGSPLILIVSSGPSSSVFPASRRHRFWQSQLSCLGKVIPVATHLLNNGSGVGVLQCLEHMIGAVRSKVLEIHSHFPHKPIILIGWNTGALVACHVSVMEYVTAVVCLGFPLLTVDGPRGDVDDPLLDMKTPVLFVIGQNSLQCHPEAMEDFREKIRAENSLVVVGGADDNLRISKAKKKSEGLTQSMVDRCIQDEIVDFLTGVLTRAEGHVGSEPRDQDAEKKKKPRDLTRRDLAFEIPERGSRPASPAARLPTSPSGSEDLSSVSSSPTSSPKTKVTTVTSTQKSSQIGTSQLLKRHVQRTEAVLTHRQAQAQFAAFLKQNMLVRKAFPPGTSSCLFVPISSESVEDIEKEELRVQLKRHHSSSPLPGAKPSKRPKIKVSLISQGDTVGGPCTLSQGGTPEAAGGKPITMTLGASAGAKELTGLLTTAKSSSSEGGGTASTTPSVASSSATPNAIHTLQSRLVATSPGSSLPGTASASSLLQGLSFSLQDISSKTSGLPGSPSPGPAPQATSVKLPTPMQSLGAITTGTSTIVRTIPVATTLSSLGATPGGKPTAIHQLLTNGSLAKLASSLPGLAQISNQASGLKVPTTITLTLRGQPSRITTLSPMGSGATPSEEPNSQMLPSSSQRLPPAP</sequence>
<feature type="chain" id="PRO_0000287138" description="KAT8 regulatory NSL complex subunit 3">
    <location>
        <begin position="1"/>
        <end position="903"/>
    </location>
</feature>
<feature type="region of interest" description="Disordered" evidence="2">
    <location>
        <begin position="478"/>
        <end position="562"/>
    </location>
</feature>
<feature type="region of interest" description="Disordered" evidence="2">
    <location>
        <begin position="626"/>
        <end position="645"/>
    </location>
</feature>
<feature type="region of interest" description="Disordered" evidence="2">
    <location>
        <begin position="657"/>
        <end position="678"/>
    </location>
</feature>
<feature type="region of interest" description="Disordered" evidence="2">
    <location>
        <begin position="696"/>
        <end position="720"/>
    </location>
</feature>
<feature type="region of interest" description="Disordered" evidence="2">
    <location>
        <begin position="761"/>
        <end position="781"/>
    </location>
</feature>
<feature type="region of interest" description="Disordered" evidence="2">
    <location>
        <begin position="868"/>
        <end position="903"/>
    </location>
</feature>
<feature type="compositionally biased region" description="Basic and acidic residues" evidence="2">
    <location>
        <begin position="478"/>
        <end position="511"/>
    </location>
</feature>
<feature type="compositionally biased region" description="Low complexity" evidence="2">
    <location>
        <begin position="523"/>
        <end position="555"/>
    </location>
</feature>
<feature type="modified residue" description="Phosphoserine" evidence="1">
    <location>
        <position position="523"/>
    </location>
</feature>
<feature type="modified residue" description="Phosphoserine" evidence="10">
    <location>
        <position position="536"/>
    </location>
</feature>
<feature type="modified residue" description="Phosphoserine" evidence="10">
    <location>
        <position position="540"/>
    </location>
</feature>
<feature type="modified residue" description="Phosphoserine" evidence="1">
    <location>
        <position position="772"/>
    </location>
</feature>
<feature type="splice variant" id="VSP_025334" description="In isoform 3." evidence="7">
    <location>
        <begin position="1"/>
        <end position="99"/>
    </location>
</feature>
<feature type="splice variant" id="VSP_025335" description="In isoform 2 and isoform 3." evidence="7 8">
    <location>
        <begin position="581"/>
        <end position="606"/>
    </location>
</feature>
<keyword id="KW-0025">Alternative splicing</keyword>
<keyword id="KW-0156">Chromatin regulator</keyword>
<keyword id="KW-0963">Cytoplasm</keyword>
<keyword id="KW-0206">Cytoskeleton</keyword>
<keyword id="KW-0493">Microtubule</keyword>
<keyword id="KW-0496">Mitochondrion</keyword>
<keyword id="KW-0539">Nucleus</keyword>
<keyword id="KW-0597">Phosphoprotein</keyword>
<keyword id="KW-1185">Reference proteome</keyword>